<gene>
    <name type="primary">MPV17L2</name>
    <name type="synonym">FKSG24</name>
</gene>
<accession>Q567V2</accession>
<accession>Q96P34</accession>
<accession>Q96QA0</accession>
<accession>Q9BSG4</accession>
<comment type="function">
    <text evidence="2">Required for the assembly and stability of the mitochondrial ribosome (PubMed:24948607). Is a positive regulator of mitochondrial protein synthesis (PubMed:24948607).</text>
</comment>
<comment type="subunit">
    <text evidence="2">Interacts with the large mitochondrial ribosomal subunit.</text>
</comment>
<comment type="subcellular location">
    <subcellularLocation>
        <location evidence="6">Membrane</location>
        <topology evidence="6">Multi-pass membrane protein</topology>
    </subcellularLocation>
    <subcellularLocation>
        <location evidence="2">Mitochondrion inner membrane</location>
    </subcellularLocation>
</comment>
<comment type="alternative products">
    <event type="alternative splicing"/>
    <isoform>
        <id>Q567V2-1</id>
        <name>1</name>
        <sequence type="displayed"/>
    </isoform>
    <isoform>
        <id>Q567V2-2</id>
        <name>2</name>
        <sequence type="described" ref="VSP_031102"/>
    </isoform>
</comment>
<comment type="similarity">
    <text evidence="6">Belongs to the peroxisomal membrane protein PXMP2/4 family.</text>
</comment>
<protein>
    <recommendedName>
        <fullName>Mpv17-like protein 2</fullName>
    </recommendedName>
</protein>
<name>M17L2_HUMAN</name>
<proteinExistence type="evidence at protein level"/>
<organism>
    <name type="scientific">Homo sapiens</name>
    <name type="common">Human</name>
    <dbReference type="NCBI Taxonomy" id="9606"/>
    <lineage>
        <taxon>Eukaryota</taxon>
        <taxon>Metazoa</taxon>
        <taxon>Chordata</taxon>
        <taxon>Craniata</taxon>
        <taxon>Vertebrata</taxon>
        <taxon>Euteleostomi</taxon>
        <taxon>Mammalia</taxon>
        <taxon>Eutheria</taxon>
        <taxon>Euarchontoglires</taxon>
        <taxon>Primates</taxon>
        <taxon>Haplorrhini</taxon>
        <taxon>Catarrhini</taxon>
        <taxon>Hominidae</taxon>
        <taxon>Homo</taxon>
    </lineage>
</organism>
<evidence type="ECO:0000255" key="1"/>
<evidence type="ECO:0000269" key="2">
    <source>
    </source>
</evidence>
<evidence type="ECO:0000269" key="3">
    <source ref="2"/>
</evidence>
<evidence type="ECO:0000303" key="4">
    <source>
    </source>
</evidence>
<evidence type="ECO:0000303" key="5">
    <source ref="2"/>
</evidence>
<evidence type="ECO:0000305" key="6"/>
<feature type="chain" id="PRO_0000317621" description="Mpv17-like protein 2">
    <location>
        <begin position="1"/>
        <end position="206"/>
    </location>
</feature>
<feature type="transmembrane region" description="Helical" evidence="1">
    <location>
        <begin position="20"/>
        <end position="42"/>
    </location>
</feature>
<feature type="transmembrane region" description="Helical" evidence="1">
    <location>
        <begin position="63"/>
        <end position="83"/>
    </location>
</feature>
<feature type="transmembrane region" description="Helical" evidence="1">
    <location>
        <begin position="102"/>
        <end position="122"/>
    </location>
</feature>
<feature type="splice variant" id="VSP_031102" description="In isoform 2." evidence="4 5">
    <location>
        <begin position="117"/>
        <end position="141"/>
    </location>
</feature>
<feature type="sequence variant" id="VAR_058299" description="In dbSNP:rs874628." evidence="3">
    <original>M</original>
    <variation>V</variation>
    <location>
        <position position="72"/>
    </location>
</feature>
<feature type="sequence conflict" description="In Ref. 1; AAL30173." evidence="6" ref="1">
    <original>F</original>
    <variation>S</variation>
    <location>
        <position position="140"/>
    </location>
</feature>
<feature type="sequence conflict" description="In Ref. 3; AAH93008." evidence="6" ref="3">
    <original>L</original>
    <variation>P</variation>
    <location>
        <position position="201"/>
    </location>
</feature>
<sequence length="206" mass="23180">MARGGWRRLRRLLSAGQLLFQGRALLVTNTLGCGALMAAGDGVRQSWEIRARPGQVFDPRRSASMFAVGCSMGPFLHYWYLSLDRLFPASGLRGFPNVLKKVLVDQLVASPLLGVWYFLGLGCLEGQTVGESCQELREKFWEFYKADWCVWPAAQFVNFLFVPPQFRVTYINGLTLGWDTYLSYLKYRSPVPLTPPGCVALDTRAD</sequence>
<reference key="1">
    <citation type="submission" date="2000-11" db="EMBL/GenBank/DDBJ databases">
        <title>Characterization of FKSG24, a novel gene located on human chromosome 19.</title>
        <authorList>
            <person name="Wang Y.-G."/>
            <person name="Gong L."/>
        </authorList>
    </citation>
    <scope>NUCLEOTIDE SEQUENCE [MRNA] (ISOFORM 1)</scope>
</reference>
<reference key="2">
    <citation type="submission" date="2001-09" db="EMBL/GenBank/DDBJ databases">
        <authorList>
            <person name="Kang L."/>
            <person name="Zhang B."/>
            <person name="Zhou Y."/>
            <person name="Peng X."/>
            <person name="Yuan J."/>
            <person name="Qiang B."/>
        </authorList>
    </citation>
    <scope>NUCLEOTIDE SEQUENCE [MRNA] (ISOFORM 2)</scope>
    <scope>VARIANT VAL-72</scope>
    <source>
        <tissue>Brain</tissue>
    </source>
</reference>
<reference key="3">
    <citation type="journal article" date="2004" name="Genome Res.">
        <title>The status, quality, and expansion of the NIH full-length cDNA project: the Mammalian Gene Collection (MGC).</title>
        <authorList>
            <consortium name="The MGC Project Team"/>
        </authorList>
    </citation>
    <scope>NUCLEOTIDE SEQUENCE [LARGE SCALE MRNA] (ISOFORMS 1 AND 2)</scope>
    <source>
        <tissue>Placenta</tissue>
        <tissue>Skin</tissue>
    </source>
</reference>
<reference key="4">
    <citation type="journal article" date="2011" name="BMC Syst. Biol.">
        <title>Initial characterization of the human central proteome.</title>
        <authorList>
            <person name="Burkard T.R."/>
            <person name="Planyavsky M."/>
            <person name="Kaupe I."/>
            <person name="Breitwieser F.P."/>
            <person name="Buerckstuemmer T."/>
            <person name="Bennett K.L."/>
            <person name="Superti-Furga G."/>
            <person name="Colinge J."/>
        </authorList>
    </citation>
    <scope>IDENTIFICATION BY MASS SPECTROMETRY [LARGE SCALE ANALYSIS]</scope>
</reference>
<reference key="5">
    <citation type="journal article" date="2014" name="Nucleic Acids Res.">
        <title>MPV17L2 is required for ribosome assembly in mitochondria.</title>
        <authorList>
            <person name="Dalla Rosa I."/>
            <person name="Durigon R."/>
            <person name="Pearce S.F."/>
            <person name="Rorbach J."/>
            <person name="Hirst E.M."/>
            <person name="Vidoni S."/>
            <person name="Reyes A."/>
            <person name="Brea-Calvo G."/>
            <person name="Minczuk M."/>
            <person name="Woellhaf M.W."/>
            <person name="Herrmann J.M."/>
            <person name="Huynen M.A."/>
            <person name="Holt I.J."/>
            <person name="Spinazzola A."/>
        </authorList>
    </citation>
    <scope>FUNCTION</scope>
    <scope>SUBCELLULAR LOCATION</scope>
    <scope>INTERACTION WITH THE LARGE MITOCHONDRIAL RIBOSOMAL SUBUNIT</scope>
</reference>
<reference key="6">
    <citation type="journal article" date="2015" name="Proteomics">
        <title>N-terminome analysis of the human mitochondrial proteome.</title>
        <authorList>
            <person name="Vaca Jacome A.S."/>
            <person name="Rabilloud T."/>
            <person name="Schaeffer-Reiss C."/>
            <person name="Rompais M."/>
            <person name="Ayoub D."/>
            <person name="Lane L."/>
            <person name="Bairoch A."/>
            <person name="Van Dorsselaer A."/>
            <person name="Carapito C."/>
        </authorList>
    </citation>
    <scope>IDENTIFICATION BY MASS SPECTROMETRY [LARGE SCALE ANALYSIS]</scope>
</reference>
<dbReference type="EMBL" id="AF416712">
    <property type="protein sequence ID" value="AAL16806.1"/>
    <property type="molecule type" value="mRNA"/>
</dbReference>
<dbReference type="EMBL" id="AF320622">
    <property type="protein sequence ID" value="AAL30173.1"/>
    <property type="molecule type" value="mRNA"/>
</dbReference>
<dbReference type="EMBL" id="BC005064">
    <property type="protein sequence ID" value="AAH05064.1"/>
    <property type="molecule type" value="mRNA"/>
</dbReference>
<dbReference type="EMBL" id="BC093008">
    <property type="protein sequence ID" value="AAH93008.1"/>
    <property type="molecule type" value="mRNA"/>
</dbReference>
<dbReference type="CCDS" id="CCDS42522.1">
    <molecule id="Q567V2-1"/>
</dbReference>
<dbReference type="RefSeq" id="NP_116072.2">
    <molecule id="Q567V2-1"/>
    <property type="nucleotide sequence ID" value="NM_032683.3"/>
</dbReference>
<dbReference type="BioGRID" id="124249">
    <property type="interactions" value="6"/>
</dbReference>
<dbReference type="FunCoup" id="Q567V2">
    <property type="interactions" value="793"/>
</dbReference>
<dbReference type="IntAct" id="Q567V2">
    <property type="interactions" value="5"/>
</dbReference>
<dbReference type="MINT" id="Q567V2"/>
<dbReference type="STRING" id="9606.ENSP00000469836"/>
<dbReference type="iPTMnet" id="Q567V2"/>
<dbReference type="PhosphoSitePlus" id="Q567V2"/>
<dbReference type="SwissPalm" id="Q567V2"/>
<dbReference type="BioMuta" id="MPV17L2"/>
<dbReference type="jPOST" id="Q567V2"/>
<dbReference type="MassIVE" id="Q567V2"/>
<dbReference type="PaxDb" id="9606-ENSP00000469836"/>
<dbReference type="PeptideAtlas" id="Q567V2"/>
<dbReference type="ProteomicsDB" id="62567">
    <molecule id="Q567V2-1"/>
</dbReference>
<dbReference type="ProteomicsDB" id="62568">
    <molecule id="Q567V2-2"/>
</dbReference>
<dbReference type="Pumba" id="Q567V2"/>
<dbReference type="Antibodypedia" id="51731">
    <property type="antibodies" value="29 antibodies from 15 providers"/>
</dbReference>
<dbReference type="DNASU" id="84769"/>
<dbReference type="Ensembl" id="ENST00000599612.3">
    <molecule id="Q567V2-1"/>
    <property type="protein sequence ID" value="ENSP00000469836.2"/>
    <property type="gene ID" value="ENSG00000254858.10"/>
</dbReference>
<dbReference type="GeneID" id="84769"/>
<dbReference type="KEGG" id="hsa:84769"/>
<dbReference type="MANE-Select" id="ENST00000599612.3">
    <property type="protein sequence ID" value="ENSP00000469836.2"/>
    <property type="RefSeq nucleotide sequence ID" value="NM_032683.3"/>
    <property type="RefSeq protein sequence ID" value="NP_116072.2"/>
</dbReference>
<dbReference type="UCSC" id="uc002nid.4">
    <molecule id="Q567V2-1"/>
    <property type="organism name" value="human"/>
</dbReference>
<dbReference type="AGR" id="HGNC:28177"/>
<dbReference type="CTD" id="84769"/>
<dbReference type="DisGeNET" id="84769"/>
<dbReference type="GeneCards" id="MPV17L2"/>
<dbReference type="HGNC" id="HGNC:28177">
    <property type="gene designation" value="MPV17L2"/>
</dbReference>
<dbReference type="HPA" id="ENSG00000254858">
    <property type="expression patterns" value="Low tissue specificity"/>
</dbReference>
<dbReference type="MIM" id="616133">
    <property type="type" value="gene"/>
</dbReference>
<dbReference type="neXtProt" id="NX_Q567V2"/>
<dbReference type="OpenTargets" id="ENSG00000254858"/>
<dbReference type="PharmGKB" id="PA164723095"/>
<dbReference type="VEuPathDB" id="HostDB:ENSG00000254858"/>
<dbReference type="eggNOG" id="KOG1944">
    <property type="taxonomic scope" value="Eukaryota"/>
</dbReference>
<dbReference type="GeneTree" id="ENSGT00940000160620"/>
<dbReference type="HOGENOM" id="CLU_049109_4_1_1"/>
<dbReference type="InParanoid" id="Q567V2"/>
<dbReference type="OMA" id="CAPTMIG"/>
<dbReference type="OrthoDB" id="10267969at2759"/>
<dbReference type="PAN-GO" id="Q567V2">
    <property type="GO annotations" value="3 GO annotations based on evolutionary models"/>
</dbReference>
<dbReference type="PhylomeDB" id="Q567V2"/>
<dbReference type="TreeFam" id="TF324392"/>
<dbReference type="PathwayCommons" id="Q567V2"/>
<dbReference type="SignaLink" id="Q567V2"/>
<dbReference type="BioGRID-ORCS" id="84769">
    <property type="hits" value="73 hits in 1169 CRISPR screens"/>
</dbReference>
<dbReference type="ChiTaRS" id="MPV17L2">
    <property type="organism name" value="human"/>
</dbReference>
<dbReference type="GenomeRNAi" id="84769"/>
<dbReference type="Pharos" id="Q567V2">
    <property type="development level" value="Tbio"/>
</dbReference>
<dbReference type="PRO" id="PR:Q567V2"/>
<dbReference type="Proteomes" id="UP000005640">
    <property type="component" value="Chromosome 19"/>
</dbReference>
<dbReference type="RNAct" id="Q567V2">
    <property type="molecule type" value="protein"/>
</dbReference>
<dbReference type="Bgee" id="ENSG00000254858">
    <property type="expression patterns" value="Expressed in right adrenal gland cortex and 106 other cell types or tissues"/>
</dbReference>
<dbReference type="ExpressionAtlas" id="Q567V2">
    <property type="expression patterns" value="baseline and differential"/>
</dbReference>
<dbReference type="GO" id="GO:0005737">
    <property type="term" value="C:cytoplasm"/>
    <property type="evidence" value="ECO:0000318"/>
    <property type="project" value="GO_Central"/>
</dbReference>
<dbReference type="GO" id="GO:0005743">
    <property type="term" value="C:mitochondrial inner membrane"/>
    <property type="evidence" value="ECO:0000314"/>
    <property type="project" value="UniProtKB"/>
</dbReference>
<dbReference type="GO" id="GO:0005739">
    <property type="term" value="C:mitochondrion"/>
    <property type="evidence" value="ECO:0006056"/>
    <property type="project" value="FlyBase"/>
</dbReference>
<dbReference type="GO" id="GO:0140978">
    <property type="term" value="F:mitochondrial large ribosomal subunit binding"/>
    <property type="evidence" value="ECO:0000314"/>
    <property type="project" value="UniProtKB"/>
</dbReference>
<dbReference type="GO" id="GO:0061668">
    <property type="term" value="P:mitochondrial ribosome assembly"/>
    <property type="evidence" value="ECO:0000315"/>
    <property type="project" value="UniProtKB"/>
</dbReference>
<dbReference type="GO" id="GO:0070131">
    <property type="term" value="P:positive regulation of mitochondrial translation"/>
    <property type="evidence" value="ECO:0000315"/>
    <property type="project" value="UniProtKB"/>
</dbReference>
<dbReference type="InterPro" id="IPR007248">
    <property type="entry name" value="Mpv17_PMP22"/>
</dbReference>
<dbReference type="PANTHER" id="PTHR11266:SF8">
    <property type="entry name" value="MPV17-LIKE PROTEIN 2"/>
    <property type="match status" value="1"/>
</dbReference>
<dbReference type="PANTHER" id="PTHR11266">
    <property type="entry name" value="PEROXISOMAL MEMBRANE PROTEIN 2, PXMP2 MPV17"/>
    <property type="match status" value="1"/>
</dbReference>
<dbReference type="Pfam" id="PF04117">
    <property type="entry name" value="Mpv17_PMP22"/>
    <property type="match status" value="1"/>
</dbReference>
<keyword id="KW-0025">Alternative splicing</keyword>
<keyword id="KW-0472">Membrane</keyword>
<keyword id="KW-0496">Mitochondrion</keyword>
<keyword id="KW-0999">Mitochondrion inner membrane</keyword>
<keyword id="KW-1267">Proteomics identification</keyword>
<keyword id="KW-1185">Reference proteome</keyword>
<keyword id="KW-0812">Transmembrane</keyword>
<keyword id="KW-1133">Transmembrane helix</keyword>